<reference key="1">
    <citation type="journal article" date="1996" name="Plant Mol. Biol.">
        <title>Identification and isoprenylation of plant GTP-binding proteins.</title>
        <authorList>
            <person name="Biermann B.J."/>
            <person name="Randall S.K."/>
            <person name="Crowell D.N."/>
        </authorList>
    </citation>
    <scope>NUCLEOTIDE SEQUENCE [MRNA] (ISOFORM 1)</scope>
</reference>
<reference key="2">
    <citation type="journal article" date="1999" name="Nature">
        <title>Sequence and analysis of chromosome 4 of the plant Arabidopsis thaliana.</title>
        <authorList>
            <person name="Mayer K.F.X."/>
            <person name="Schueller C."/>
            <person name="Wambutt R."/>
            <person name="Murphy G."/>
            <person name="Volckaert G."/>
            <person name="Pohl T."/>
            <person name="Duesterhoeft A."/>
            <person name="Stiekema W."/>
            <person name="Entian K.-D."/>
            <person name="Terryn N."/>
            <person name="Harris B."/>
            <person name="Ansorge W."/>
            <person name="Brandt P."/>
            <person name="Grivell L.A."/>
            <person name="Rieger M."/>
            <person name="Weichselgartner M."/>
            <person name="de Simone V."/>
            <person name="Obermaier B."/>
            <person name="Mache R."/>
            <person name="Mueller M."/>
            <person name="Kreis M."/>
            <person name="Delseny M."/>
            <person name="Puigdomenech P."/>
            <person name="Watson M."/>
            <person name="Schmidtheini T."/>
            <person name="Reichert B."/>
            <person name="Portetelle D."/>
            <person name="Perez-Alonso M."/>
            <person name="Boutry M."/>
            <person name="Bancroft I."/>
            <person name="Vos P."/>
            <person name="Hoheisel J."/>
            <person name="Zimmermann W."/>
            <person name="Wedler H."/>
            <person name="Ridley P."/>
            <person name="Langham S.-A."/>
            <person name="McCullagh B."/>
            <person name="Bilham L."/>
            <person name="Robben J."/>
            <person name="van der Schueren J."/>
            <person name="Grymonprez B."/>
            <person name="Chuang Y.-J."/>
            <person name="Vandenbussche F."/>
            <person name="Braeken M."/>
            <person name="Weltjens I."/>
            <person name="Voet M."/>
            <person name="Bastiaens I."/>
            <person name="Aert R."/>
            <person name="Defoor E."/>
            <person name="Weitzenegger T."/>
            <person name="Bothe G."/>
            <person name="Ramsperger U."/>
            <person name="Hilbert H."/>
            <person name="Braun M."/>
            <person name="Holzer E."/>
            <person name="Brandt A."/>
            <person name="Peters S."/>
            <person name="van Staveren M."/>
            <person name="Dirkse W."/>
            <person name="Mooijman P."/>
            <person name="Klein Lankhorst R."/>
            <person name="Rose M."/>
            <person name="Hauf J."/>
            <person name="Koetter P."/>
            <person name="Berneiser S."/>
            <person name="Hempel S."/>
            <person name="Feldpausch M."/>
            <person name="Lamberth S."/>
            <person name="Van den Daele H."/>
            <person name="De Keyser A."/>
            <person name="Buysshaert C."/>
            <person name="Gielen J."/>
            <person name="Villarroel R."/>
            <person name="De Clercq R."/>
            <person name="van Montagu M."/>
            <person name="Rogers J."/>
            <person name="Cronin A."/>
            <person name="Quail M.A."/>
            <person name="Bray-Allen S."/>
            <person name="Clark L."/>
            <person name="Doggett J."/>
            <person name="Hall S."/>
            <person name="Kay M."/>
            <person name="Lennard N."/>
            <person name="McLay K."/>
            <person name="Mayes R."/>
            <person name="Pettett A."/>
            <person name="Rajandream M.A."/>
            <person name="Lyne M."/>
            <person name="Benes V."/>
            <person name="Rechmann S."/>
            <person name="Borkova D."/>
            <person name="Bloecker H."/>
            <person name="Scharfe M."/>
            <person name="Grimm M."/>
            <person name="Loehnert T.-H."/>
            <person name="Dose S."/>
            <person name="de Haan M."/>
            <person name="Maarse A.C."/>
            <person name="Schaefer M."/>
            <person name="Mueller-Auer S."/>
            <person name="Gabel C."/>
            <person name="Fuchs M."/>
            <person name="Fartmann B."/>
            <person name="Granderath K."/>
            <person name="Dauner D."/>
            <person name="Herzl A."/>
            <person name="Neumann S."/>
            <person name="Argiriou A."/>
            <person name="Vitale D."/>
            <person name="Liguori R."/>
            <person name="Piravandi E."/>
            <person name="Massenet O."/>
            <person name="Quigley F."/>
            <person name="Clabauld G."/>
            <person name="Muendlein A."/>
            <person name="Felber R."/>
            <person name="Schnabl S."/>
            <person name="Hiller R."/>
            <person name="Schmidt W."/>
            <person name="Lecharny A."/>
            <person name="Aubourg S."/>
            <person name="Chefdor F."/>
            <person name="Cooke R."/>
            <person name="Berger C."/>
            <person name="Monfort A."/>
            <person name="Casacuberta E."/>
            <person name="Gibbons T."/>
            <person name="Weber N."/>
            <person name="Vandenbol M."/>
            <person name="Bargues M."/>
            <person name="Terol J."/>
            <person name="Torres A."/>
            <person name="Perez-Perez A."/>
            <person name="Purnelle B."/>
            <person name="Bent E."/>
            <person name="Johnson S."/>
            <person name="Tacon D."/>
            <person name="Jesse T."/>
            <person name="Heijnen L."/>
            <person name="Schwarz S."/>
            <person name="Scholler P."/>
            <person name="Heber S."/>
            <person name="Francs P."/>
            <person name="Bielke C."/>
            <person name="Frishman D."/>
            <person name="Haase D."/>
            <person name="Lemcke K."/>
            <person name="Mewes H.-W."/>
            <person name="Stocker S."/>
            <person name="Zaccaria P."/>
            <person name="Bevan M."/>
            <person name="Wilson R.K."/>
            <person name="de la Bastide M."/>
            <person name="Habermann K."/>
            <person name="Parnell L."/>
            <person name="Dedhia N."/>
            <person name="Gnoj L."/>
            <person name="Schutz K."/>
            <person name="Huang E."/>
            <person name="Spiegel L."/>
            <person name="Sekhon M."/>
            <person name="Murray J."/>
            <person name="Sheet P."/>
            <person name="Cordes M."/>
            <person name="Abu-Threideh J."/>
            <person name="Stoneking T."/>
            <person name="Kalicki J."/>
            <person name="Graves T."/>
            <person name="Harmon G."/>
            <person name="Edwards J."/>
            <person name="Latreille P."/>
            <person name="Courtney L."/>
            <person name="Cloud J."/>
            <person name="Abbott A."/>
            <person name="Scott K."/>
            <person name="Johnson D."/>
            <person name="Minx P."/>
            <person name="Bentley D."/>
            <person name="Fulton B."/>
            <person name="Miller N."/>
            <person name="Greco T."/>
            <person name="Kemp K."/>
            <person name="Kramer J."/>
            <person name="Fulton L."/>
            <person name="Mardis E."/>
            <person name="Dante M."/>
            <person name="Pepin K."/>
            <person name="Hillier L.W."/>
            <person name="Nelson J."/>
            <person name="Spieth J."/>
            <person name="Ryan E."/>
            <person name="Andrews S."/>
            <person name="Geisel C."/>
            <person name="Layman D."/>
            <person name="Du H."/>
            <person name="Ali J."/>
            <person name="Berghoff A."/>
            <person name="Jones K."/>
            <person name="Drone K."/>
            <person name="Cotton M."/>
            <person name="Joshu C."/>
            <person name="Antonoiu B."/>
            <person name="Zidanic M."/>
            <person name="Strong C."/>
            <person name="Sun H."/>
            <person name="Lamar B."/>
            <person name="Yordan C."/>
            <person name="Ma P."/>
            <person name="Zhong J."/>
            <person name="Preston R."/>
            <person name="Vil D."/>
            <person name="Shekher M."/>
            <person name="Matero A."/>
            <person name="Shah R."/>
            <person name="Swaby I.K."/>
            <person name="O'Shaughnessy A."/>
            <person name="Rodriguez M."/>
            <person name="Hoffman J."/>
            <person name="Till S."/>
            <person name="Granat S."/>
            <person name="Shohdy N."/>
            <person name="Hasegawa A."/>
            <person name="Hameed A."/>
            <person name="Lodhi M."/>
            <person name="Johnson A."/>
            <person name="Chen E."/>
            <person name="Marra M.A."/>
            <person name="Martienssen R."/>
            <person name="McCombie W.R."/>
        </authorList>
    </citation>
    <scope>NUCLEOTIDE SEQUENCE [LARGE SCALE GENOMIC DNA]</scope>
    <source>
        <strain>cv. Columbia</strain>
    </source>
</reference>
<reference key="3">
    <citation type="journal article" date="2017" name="Plant J.">
        <title>Araport11: a complete reannotation of the Arabidopsis thaliana reference genome.</title>
        <authorList>
            <person name="Cheng C.Y."/>
            <person name="Krishnakumar V."/>
            <person name="Chan A.P."/>
            <person name="Thibaud-Nissen F."/>
            <person name="Schobel S."/>
            <person name="Town C.D."/>
        </authorList>
    </citation>
    <scope>GENOME REANNOTATION</scope>
    <source>
        <strain>cv. Columbia</strain>
    </source>
</reference>
<reference key="4">
    <citation type="journal article" date="2003" name="Science">
        <title>Empirical analysis of transcriptional activity in the Arabidopsis genome.</title>
        <authorList>
            <person name="Yamada K."/>
            <person name="Lim J."/>
            <person name="Dale J.M."/>
            <person name="Chen H."/>
            <person name="Shinn P."/>
            <person name="Palm C.J."/>
            <person name="Southwick A.M."/>
            <person name="Wu H.C."/>
            <person name="Kim C.J."/>
            <person name="Nguyen M."/>
            <person name="Pham P.K."/>
            <person name="Cheuk R.F."/>
            <person name="Karlin-Newmann G."/>
            <person name="Liu S.X."/>
            <person name="Lam B."/>
            <person name="Sakano H."/>
            <person name="Wu T."/>
            <person name="Yu G."/>
            <person name="Miranda M."/>
            <person name="Quach H.L."/>
            <person name="Tripp M."/>
            <person name="Chang C.H."/>
            <person name="Lee J.M."/>
            <person name="Toriumi M.J."/>
            <person name="Chan M.M."/>
            <person name="Tang C.C."/>
            <person name="Onodera C.S."/>
            <person name="Deng J.M."/>
            <person name="Akiyama K."/>
            <person name="Ansari Y."/>
            <person name="Arakawa T."/>
            <person name="Banh J."/>
            <person name="Banno F."/>
            <person name="Bowser L."/>
            <person name="Brooks S.Y."/>
            <person name="Carninci P."/>
            <person name="Chao Q."/>
            <person name="Choy N."/>
            <person name="Enju A."/>
            <person name="Goldsmith A.D."/>
            <person name="Gurjal M."/>
            <person name="Hansen N.F."/>
            <person name="Hayashizaki Y."/>
            <person name="Johnson-Hopson C."/>
            <person name="Hsuan V.W."/>
            <person name="Iida K."/>
            <person name="Karnes M."/>
            <person name="Khan S."/>
            <person name="Koesema E."/>
            <person name="Ishida J."/>
            <person name="Jiang P.X."/>
            <person name="Jones T."/>
            <person name="Kawai J."/>
            <person name="Kamiya A."/>
            <person name="Meyers C."/>
            <person name="Nakajima M."/>
            <person name="Narusaka M."/>
            <person name="Seki M."/>
            <person name="Sakurai T."/>
            <person name="Satou M."/>
            <person name="Tamse R."/>
            <person name="Vaysberg M."/>
            <person name="Wallender E.K."/>
            <person name="Wong C."/>
            <person name="Yamamura Y."/>
            <person name="Yuan S."/>
            <person name="Shinozaki K."/>
            <person name="Davis R.W."/>
            <person name="Theologis A."/>
            <person name="Ecker J.R."/>
        </authorList>
    </citation>
    <scope>NUCLEOTIDE SEQUENCE [LARGE SCALE MRNA] (ISOFORM 1)</scope>
    <source>
        <strain>cv. Columbia</strain>
    </source>
</reference>
<reference key="5">
    <citation type="submission" date="2002-03" db="EMBL/GenBank/DDBJ databases">
        <title>Full-length cDNA from Arabidopsis thaliana.</title>
        <authorList>
            <person name="Brover V.V."/>
            <person name="Troukhan M.E."/>
            <person name="Alexandrov N.A."/>
            <person name="Lu Y.-P."/>
            <person name="Flavell R.B."/>
            <person name="Feldmann K.A."/>
        </authorList>
    </citation>
    <scope>NUCLEOTIDE SEQUENCE [LARGE SCALE MRNA] (ISOFORM 1)</scope>
</reference>
<reference key="6">
    <citation type="journal article" date="2003" name="Plant Physiol.">
        <title>Analysis of the small GTPase gene superfamily of Arabidopsis.</title>
        <authorList>
            <person name="Vernoud V."/>
            <person name="Horton A.C."/>
            <person name="Yang Z."/>
            <person name="Nielsen E."/>
        </authorList>
    </citation>
    <scope>GENE FAMILY</scope>
    <scope>NOMENCLATURE</scope>
</reference>
<evidence type="ECO:0000250" key="1"/>
<evidence type="ECO:0000305" key="2"/>
<keyword id="KW-0025">Alternative splicing</keyword>
<keyword id="KW-1003">Cell membrane</keyword>
<keyword id="KW-0342">GTP-binding</keyword>
<keyword id="KW-0449">Lipoprotein</keyword>
<keyword id="KW-0472">Membrane</keyword>
<keyword id="KW-0547">Nucleotide-binding</keyword>
<keyword id="KW-0636">Prenylation</keyword>
<keyword id="KW-0653">Protein transport</keyword>
<keyword id="KW-1185">Reference proteome</keyword>
<keyword id="KW-0813">Transport</keyword>
<organism>
    <name type="scientific">Arabidopsis thaliana</name>
    <name type="common">Mouse-ear cress</name>
    <dbReference type="NCBI Taxonomy" id="3702"/>
    <lineage>
        <taxon>Eukaryota</taxon>
        <taxon>Viridiplantae</taxon>
        <taxon>Streptophyta</taxon>
        <taxon>Embryophyta</taxon>
        <taxon>Tracheophyta</taxon>
        <taxon>Spermatophyta</taxon>
        <taxon>Magnoliopsida</taxon>
        <taxon>eudicotyledons</taxon>
        <taxon>Gunneridae</taxon>
        <taxon>Pentapetalae</taxon>
        <taxon>rosids</taxon>
        <taxon>malvids</taxon>
        <taxon>Brassicales</taxon>
        <taxon>Brassicaceae</taxon>
        <taxon>Camelineae</taxon>
        <taxon>Arabidopsis</taxon>
    </lineage>
</organism>
<feature type="chain" id="PRO_0000407355" description="Ras-related protein RABB1b">
    <location>
        <begin position="1"/>
        <end position="211"/>
    </location>
</feature>
<feature type="short sequence motif" description="Effector region" evidence="1">
    <location>
        <begin position="35"/>
        <end position="43"/>
    </location>
</feature>
<feature type="binding site" evidence="1">
    <location>
        <begin position="13"/>
        <end position="20"/>
    </location>
    <ligand>
        <name>GTP</name>
        <dbReference type="ChEBI" id="CHEBI:37565"/>
    </ligand>
</feature>
<feature type="binding site" evidence="1">
    <location>
        <begin position="61"/>
        <end position="65"/>
    </location>
    <ligand>
        <name>GTP</name>
        <dbReference type="ChEBI" id="CHEBI:37565"/>
    </ligand>
</feature>
<feature type="binding site" evidence="1">
    <location>
        <begin position="119"/>
        <end position="122"/>
    </location>
    <ligand>
        <name>GTP</name>
        <dbReference type="ChEBI" id="CHEBI:37565"/>
    </ligand>
</feature>
<feature type="binding site" evidence="1">
    <location>
        <begin position="149"/>
        <end position="150"/>
    </location>
    <ligand>
        <name>GTP</name>
        <dbReference type="ChEBI" id="CHEBI:37565"/>
    </ligand>
</feature>
<feature type="lipid moiety-binding region" description="S-geranylgeranyl cysteine" evidence="1">
    <location>
        <position position="209"/>
    </location>
</feature>
<feature type="lipid moiety-binding region" description="S-geranylgeranyl cysteine" evidence="1">
    <location>
        <position position="210"/>
    </location>
</feature>
<feature type="splice variant" id="VSP_040946" description="In isoform 2." evidence="2">
    <location>
        <begin position="1"/>
        <end position="46"/>
    </location>
</feature>
<comment type="function">
    <text evidence="1">Intracellular vesicle trafficking and protein transport.</text>
</comment>
<comment type="subcellular location">
    <subcellularLocation>
        <location evidence="2">Cell membrane</location>
        <topology evidence="2">Lipid-anchor</topology>
        <orientation evidence="2">Cytoplasmic side</orientation>
    </subcellularLocation>
</comment>
<comment type="alternative products">
    <event type="alternative splicing"/>
    <isoform>
        <id>Q38922-1</id>
        <name>1</name>
        <sequence type="displayed"/>
    </isoform>
    <isoform>
        <id>Q38922-3</id>
        <name>2</name>
        <sequence type="described" ref="VSP_040946"/>
    </isoform>
</comment>
<comment type="similarity">
    <text evidence="2">Belongs to the small GTPase superfamily. Rab family.</text>
</comment>
<gene>
    <name type="primary">RABB1B</name>
    <name type="synonym">GB2</name>
    <name type="synonym">RAB2C</name>
    <name type="ordered locus">At4g35860</name>
    <name type="ORF">F4B14.130</name>
</gene>
<protein>
    <recommendedName>
        <fullName>Ras-related protein RABB1b</fullName>
        <shortName>AtRABB1b</shortName>
    </recommendedName>
    <alternativeName>
        <fullName>Ras-related protein GB2</fullName>
        <shortName>AtGB2</shortName>
    </alternativeName>
    <alternativeName>
        <fullName>Ras-related protein Rab2C</fullName>
        <shortName>AtRab2C</shortName>
    </alternativeName>
</protein>
<accession>Q38922</accession>
<accession>A8MRA2</accession>
<proteinExistence type="evidence at transcript level"/>
<name>RAB1B_ARATH</name>
<sequence length="211" mass="23175">MSYDYLFKYIIIGDTGVGKSCLLLQFTDKRFQPVHDLTIGVEFGARMVTVDGRPIKLQIWDTAGQESFRSITRSYYRGAAGALLVYDITRRETFNHLASWLEDARQHANPNMSIMLIGNKCDLAHKRAVSKEEGQQFAKEHGLLFLEASARTAQNVEEAFIETAAKILQNIQDGVFDVSNESSGIKIGYGRTQGAAGGRDGTISQGGGCCG</sequence>
<dbReference type="EMBL" id="U46925">
    <property type="protein sequence ID" value="AAA87883.1"/>
    <property type="molecule type" value="mRNA"/>
</dbReference>
<dbReference type="EMBL" id="AL031986">
    <property type="protein sequence ID" value="CAA21472.1"/>
    <property type="molecule type" value="Genomic_DNA"/>
</dbReference>
<dbReference type="EMBL" id="AL161588">
    <property type="protein sequence ID" value="CAB81495.1"/>
    <property type="molecule type" value="Genomic_DNA"/>
</dbReference>
<dbReference type="EMBL" id="CP002687">
    <property type="protein sequence ID" value="AEE86581.1"/>
    <property type="molecule type" value="Genomic_DNA"/>
</dbReference>
<dbReference type="EMBL" id="CP002687">
    <property type="protein sequence ID" value="AEE86582.1"/>
    <property type="molecule type" value="Genomic_DNA"/>
</dbReference>
<dbReference type="EMBL" id="AY065262">
    <property type="protein sequence ID" value="AAL38738.1"/>
    <property type="molecule type" value="mRNA"/>
</dbReference>
<dbReference type="EMBL" id="AY117348">
    <property type="protein sequence ID" value="AAM51423.1"/>
    <property type="molecule type" value="mRNA"/>
</dbReference>
<dbReference type="EMBL" id="AY085750">
    <property type="protein sequence ID" value="AAM62968.1"/>
    <property type="molecule type" value="mRNA"/>
</dbReference>
<dbReference type="PIR" id="S71585">
    <property type="entry name" value="S71585"/>
</dbReference>
<dbReference type="RefSeq" id="NP_001078499.1">
    <molecule id="Q38922-3"/>
    <property type="nucleotide sequence ID" value="NM_001085030.1"/>
</dbReference>
<dbReference type="RefSeq" id="NP_195311.1">
    <molecule id="Q38922-1"/>
    <property type="nucleotide sequence ID" value="NM_119752.4"/>
</dbReference>
<dbReference type="SMR" id="Q38922"/>
<dbReference type="BioGRID" id="15022">
    <property type="interactions" value="13"/>
</dbReference>
<dbReference type="FunCoup" id="Q38922">
    <property type="interactions" value="3854"/>
</dbReference>
<dbReference type="IntAct" id="Q38922">
    <property type="interactions" value="12"/>
</dbReference>
<dbReference type="STRING" id="3702.Q38922"/>
<dbReference type="PaxDb" id="3702-AT4G35860.1"/>
<dbReference type="ProteomicsDB" id="225938">
    <molecule id="Q38922-1"/>
</dbReference>
<dbReference type="EnsemblPlants" id="AT4G35860.1">
    <molecule id="Q38922-1"/>
    <property type="protein sequence ID" value="AT4G35860.1"/>
    <property type="gene ID" value="AT4G35860"/>
</dbReference>
<dbReference type="EnsemblPlants" id="AT4G35860.2">
    <molecule id="Q38922-3"/>
    <property type="protein sequence ID" value="AT4G35860.2"/>
    <property type="gene ID" value="AT4G35860"/>
</dbReference>
<dbReference type="GeneID" id="829740"/>
<dbReference type="Gramene" id="AT4G35860.1">
    <molecule id="Q38922-1"/>
    <property type="protein sequence ID" value="AT4G35860.1"/>
    <property type="gene ID" value="AT4G35860"/>
</dbReference>
<dbReference type="Gramene" id="AT4G35860.2">
    <molecule id="Q38922-3"/>
    <property type="protein sequence ID" value="AT4G35860.2"/>
    <property type="gene ID" value="AT4G35860"/>
</dbReference>
<dbReference type="KEGG" id="ath:AT4G35860"/>
<dbReference type="Araport" id="AT4G35860"/>
<dbReference type="TAIR" id="AT4G35860">
    <property type="gene designation" value="GB2"/>
</dbReference>
<dbReference type="eggNOG" id="KOG0098">
    <property type="taxonomic scope" value="Eukaryota"/>
</dbReference>
<dbReference type="HOGENOM" id="CLU_041217_23_1_1"/>
<dbReference type="InParanoid" id="Q38922"/>
<dbReference type="OMA" id="FNHLTCW"/>
<dbReference type="OrthoDB" id="1067587at2759"/>
<dbReference type="PhylomeDB" id="Q38922"/>
<dbReference type="PRO" id="PR:Q38922"/>
<dbReference type="Proteomes" id="UP000006548">
    <property type="component" value="Chromosome 4"/>
</dbReference>
<dbReference type="ExpressionAtlas" id="Q38922">
    <property type="expression patterns" value="baseline and differential"/>
</dbReference>
<dbReference type="GO" id="GO:0009507">
    <property type="term" value="C:chloroplast"/>
    <property type="evidence" value="ECO:0007005"/>
    <property type="project" value="TAIR"/>
</dbReference>
<dbReference type="GO" id="GO:0005886">
    <property type="term" value="C:plasma membrane"/>
    <property type="evidence" value="ECO:0007005"/>
    <property type="project" value="TAIR"/>
</dbReference>
<dbReference type="GO" id="GO:0005525">
    <property type="term" value="F:GTP binding"/>
    <property type="evidence" value="ECO:0000314"/>
    <property type="project" value="TAIR"/>
</dbReference>
<dbReference type="GO" id="GO:0003924">
    <property type="term" value="F:GTPase activity"/>
    <property type="evidence" value="ECO:0007669"/>
    <property type="project" value="InterPro"/>
</dbReference>
<dbReference type="GO" id="GO:0015031">
    <property type="term" value="P:protein transport"/>
    <property type="evidence" value="ECO:0007669"/>
    <property type="project" value="UniProtKB-KW"/>
</dbReference>
<dbReference type="CDD" id="cd01866">
    <property type="entry name" value="Rab2"/>
    <property type="match status" value="1"/>
</dbReference>
<dbReference type="FunFam" id="3.40.50.300:FF:000263">
    <property type="entry name" value="Ras-related protein RABB1c"/>
    <property type="match status" value="1"/>
</dbReference>
<dbReference type="Gene3D" id="3.40.50.300">
    <property type="entry name" value="P-loop containing nucleotide triphosphate hydrolases"/>
    <property type="match status" value="1"/>
</dbReference>
<dbReference type="InterPro" id="IPR027417">
    <property type="entry name" value="P-loop_NTPase"/>
</dbReference>
<dbReference type="InterPro" id="IPR050209">
    <property type="entry name" value="Rab_GTPases_membrane_traffic"/>
</dbReference>
<dbReference type="InterPro" id="IPR005225">
    <property type="entry name" value="Small_GTP-bd"/>
</dbReference>
<dbReference type="InterPro" id="IPR001806">
    <property type="entry name" value="Small_GTPase"/>
</dbReference>
<dbReference type="NCBIfam" id="TIGR00231">
    <property type="entry name" value="small_GTP"/>
    <property type="match status" value="1"/>
</dbReference>
<dbReference type="PANTHER" id="PTHR47979">
    <property type="entry name" value="DRAB11-RELATED"/>
    <property type="match status" value="1"/>
</dbReference>
<dbReference type="Pfam" id="PF00071">
    <property type="entry name" value="Ras"/>
    <property type="match status" value="1"/>
</dbReference>
<dbReference type="PRINTS" id="PR00449">
    <property type="entry name" value="RASTRNSFRMNG"/>
</dbReference>
<dbReference type="SMART" id="SM00175">
    <property type="entry name" value="RAB"/>
    <property type="match status" value="1"/>
</dbReference>
<dbReference type="SMART" id="SM00176">
    <property type="entry name" value="RAN"/>
    <property type="match status" value="1"/>
</dbReference>
<dbReference type="SMART" id="SM00173">
    <property type="entry name" value="RAS"/>
    <property type="match status" value="1"/>
</dbReference>
<dbReference type="SMART" id="SM00174">
    <property type="entry name" value="RHO"/>
    <property type="match status" value="1"/>
</dbReference>
<dbReference type="SUPFAM" id="SSF52540">
    <property type="entry name" value="P-loop containing nucleoside triphosphate hydrolases"/>
    <property type="match status" value="1"/>
</dbReference>
<dbReference type="PROSITE" id="PS51419">
    <property type="entry name" value="RAB"/>
    <property type="match status" value="1"/>
</dbReference>